<protein>
    <recommendedName>
        <fullName evidence="1">Adenine phosphoribosyltransferase</fullName>
        <shortName evidence="1">APRT</shortName>
        <ecNumber evidence="1">2.4.2.7</ecNumber>
    </recommendedName>
</protein>
<comment type="function">
    <text evidence="1">Catalyzes a salvage reaction resulting in the formation of AMP, that is energically less costly than de novo synthesis.</text>
</comment>
<comment type="catalytic activity">
    <reaction evidence="1">
        <text>AMP + diphosphate = 5-phospho-alpha-D-ribose 1-diphosphate + adenine</text>
        <dbReference type="Rhea" id="RHEA:16609"/>
        <dbReference type="ChEBI" id="CHEBI:16708"/>
        <dbReference type="ChEBI" id="CHEBI:33019"/>
        <dbReference type="ChEBI" id="CHEBI:58017"/>
        <dbReference type="ChEBI" id="CHEBI:456215"/>
        <dbReference type="EC" id="2.4.2.7"/>
    </reaction>
</comment>
<comment type="pathway">
    <text evidence="1">Purine metabolism; AMP biosynthesis via salvage pathway; AMP from adenine: step 1/1.</text>
</comment>
<comment type="subunit">
    <text evidence="1">Homodimer.</text>
</comment>
<comment type="subcellular location">
    <subcellularLocation>
        <location evidence="1">Cytoplasm</location>
    </subcellularLocation>
</comment>
<comment type="similarity">
    <text evidence="1">Belongs to the purine/pyrimidine phosphoribosyltransferase family.</text>
</comment>
<proteinExistence type="inferred from homology"/>
<accession>Q6N1B4</accession>
<name>APT_RHOPA</name>
<feature type="chain" id="PRO_0000149442" description="Adenine phosphoribosyltransferase">
    <location>
        <begin position="1"/>
        <end position="181"/>
    </location>
</feature>
<organism>
    <name type="scientific">Rhodopseudomonas palustris (strain ATCC BAA-98 / CGA009)</name>
    <dbReference type="NCBI Taxonomy" id="258594"/>
    <lineage>
        <taxon>Bacteria</taxon>
        <taxon>Pseudomonadati</taxon>
        <taxon>Pseudomonadota</taxon>
        <taxon>Alphaproteobacteria</taxon>
        <taxon>Hyphomicrobiales</taxon>
        <taxon>Nitrobacteraceae</taxon>
        <taxon>Rhodopseudomonas</taxon>
    </lineage>
</organism>
<dbReference type="EC" id="2.4.2.7" evidence="1"/>
<dbReference type="EMBL" id="BX572607">
    <property type="protein sequence ID" value="CAE29933.1"/>
    <property type="molecule type" value="Genomic_DNA"/>
</dbReference>
<dbReference type="RefSeq" id="WP_011160026.1">
    <property type="nucleotide sequence ID" value="NZ_CP116810.1"/>
</dbReference>
<dbReference type="SMR" id="Q6N1B4"/>
<dbReference type="STRING" id="258594.RPA4492"/>
<dbReference type="eggNOG" id="COG0503">
    <property type="taxonomic scope" value="Bacteria"/>
</dbReference>
<dbReference type="HOGENOM" id="CLU_063339_3_0_5"/>
<dbReference type="PhylomeDB" id="Q6N1B4"/>
<dbReference type="UniPathway" id="UPA00588">
    <property type="reaction ID" value="UER00646"/>
</dbReference>
<dbReference type="GO" id="GO:0005737">
    <property type="term" value="C:cytoplasm"/>
    <property type="evidence" value="ECO:0007669"/>
    <property type="project" value="UniProtKB-SubCell"/>
</dbReference>
<dbReference type="GO" id="GO:0002055">
    <property type="term" value="F:adenine binding"/>
    <property type="evidence" value="ECO:0007669"/>
    <property type="project" value="TreeGrafter"/>
</dbReference>
<dbReference type="GO" id="GO:0003999">
    <property type="term" value="F:adenine phosphoribosyltransferase activity"/>
    <property type="evidence" value="ECO:0007669"/>
    <property type="project" value="UniProtKB-UniRule"/>
</dbReference>
<dbReference type="GO" id="GO:0016208">
    <property type="term" value="F:AMP binding"/>
    <property type="evidence" value="ECO:0007669"/>
    <property type="project" value="TreeGrafter"/>
</dbReference>
<dbReference type="GO" id="GO:0006168">
    <property type="term" value="P:adenine salvage"/>
    <property type="evidence" value="ECO:0007669"/>
    <property type="project" value="InterPro"/>
</dbReference>
<dbReference type="GO" id="GO:0044209">
    <property type="term" value="P:AMP salvage"/>
    <property type="evidence" value="ECO:0007669"/>
    <property type="project" value="UniProtKB-UniRule"/>
</dbReference>
<dbReference type="GO" id="GO:0006166">
    <property type="term" value="P:purine ribonucleoside salvage"/>
    <property type="evidence" value="ECO:0007669"/>
    <property type="project" value="UniProtKB-KW"/>
</dbReference>
<dbReference type="CDD" id="cd06223">
    <property type="entry name" value="PRTases_typeI"/>
    <property type="match status" value="1"/>
</dbReference>
<dbReference type="FunFam" id="3.40.50.2020:FF:000021">
    <property type="entry name" value="Adenine phosphoribosyltransferase"/>
    <property type="match status" value="1"/>
</dbReference>
<dbReference type="Gene3D" id="3.40.50.2020">
    <property type="match status" value="1"/>
</dbReference>
<dbReference type="HAMAP" id="MF_00004">
    <property type="entry name" value="Aden_phosphoribosyltr"/>
    <property type="match status" value="1"/>
</dbReference>
<dbReference type="InterPro" id="IPR005764">
    <property type="entry name" value="Ade_phspho_trans"/>
</dbReference>
<dbReference type="InterPro" id="IPR000836">
    <property type="entry name" value="PRibTrfase_dom"/>
</dbReference>
<dbReference type="InterPro" id="IPR029057">
    <property type="entry name" value="PRTase-like"/>
</dbReference>
<dbReference type="InterPro" id="IPR050054">
    <property type="entry name" value="UPRTase/APRTase"/>
</dbReference>
<dbReference type="NCBIfam" id="TIGR01090">
    <property type="entry name" value="apt"/>
    <property type="match status" value="1"/>
</dbReference>
<dbReference type="NCBIfam" id="NF002634">
    <property type="entry name" value="PRK02304.1-3"/>
    <property type="match status" value="1"/>
</dbReference>
<dbReference type="NCBIfam" id="NF002636">
    <property type="entry name" value="PRK02304.1-5"/>
    <property type="match status" value="1"/>
</dbReference>
<dbReference type="PANTHER" id="PTHR32315">
    <property type="entry name" value="ADENINE PHOSPHORIBOSYLTRANSFERASE"/>
    <property type="match status" value="1"/>
</dbReference>
<dbReference type="PANTHER" id="PTHR32315:SF3">
    <property type="entry name" value="ADENINE PHOSPHORIBOSYLTRANSFERASE"/>
    <property type="match status" value="1"/>
</dbReference>
<dbReference type="Pfam" id="PF00156">
    <property type="entry name" value="Pribosyltran"/>
    <property type="match status" value="1"/>
</dbReference>
<dbReference type="SUPFAM" id="SSF53271">
    <property type="entry name" value="PRTase-like"/>
    <property type="match status" value="1"/>
</dbReference>
<dbReference type="PROSITE" id="PS00103">
    <property type="entry name" value="PUR_PYR_PR_TRANSFER"/>
    <property type="match status" value="1"/>
</dbReference>
<reference key="1">
    <citation type="journal article" date="2004" name="Nat. Biotechnol.">
        <title>Complete genome sequence of the metabolically versatile photosynthetic bacterium Rhodopseudomonas palustris.</title>
        <authorList>
            <person name="Larimer F.W."/>
            <person name="Chain P."/>
            <person name="Hauser L."/>
            <person name="Lamerdin J.E."/>
            <person name="Malfatti S."/>
            <person name="Do L."/>
            <person name="Land M.L."/>
            <person name="Pelletier D.A."/>
            <person name="Beatty J.T."/>
            <person name="Lang A.S."/>
            <person name="Tabita F.R."/>
            <person name="Gibson J.L."/>
            <person name="Hanson T.E."/>
            <person name="Bobst C."/>
            <person name="Torres y Torres J.L."/>
            <person name="Peres C."/>
            <person name="Harrison F.H."/>
            <person name="Gibson J."/>
            <person name="Harwood C.S."/>
        </authorList>
    </citation>
    <scope>NUCLEOTIDE SEQUENCE [LARGE SCALE GENOMIC DNA]</scope>
    <source>
        <strain>ATCC BAA-98 / CGA009</strain>
    </source>
</reference>
<evidence type="ECO:0000255" key="1">
    <source>
        <dbReference type="HAMAP-Rule" id="MF_00004"/>
    </source>
</evidence>
<gene>
    <name evidence="1" type="primary">apt</name>
    <name type="ordered locus">RPA4492</name>
</gene>
<keyword id="KW-0963">Cytoplasm</keyword>
<keyword id="KW-0328">Glycosyltransferase</keyword>
<keyword id="KW-0660">Purine salvage</keyword>
<keyword id="KW-0808">Transferase</keyword>
<sequence length="181" mass="19340">MTPEFANDLKASVRAIPDYPKPGIIFRDITTLLGEPRAFRRAIDELVQPWAGSKIDKVAGIEARGFIIGGAIAHQVSSGFVPIRKKGKLPHTCVSMEYALEYGTDKIEVHVDAITPGERVILVDDLIATGGTAEGAIKLLRQIGAEVVAACFVIDLPELGGAAKIRAMGVPVRTLVAFEGH</sequence>